<organism>
    <name type="scientific">Medicago sativa subsp. falcata</name>
    <name type="common">Sickle medic</name>
    <name type="synonym">Medicago falcata</name>
    <dbReference type="NCBI Taxonomy" id="3878"/>
    <lineage>
        <taxon>Eukaryota</taxon>
        <taxon>Viridiplantae</taxon>
        <taxon>Streptophyta</taxon>
        <taxon>Embryophyta</taxon>
        <taxon>Tracheophyta</taxon>
        <taxon>Spermatophyta</taxon>
        <taxon>Magnoliopsida</taxon>
        <taxon>eudicotyledons</taxon>
        <taxon>Gunneridae</taxon>
        <taxon>Pentapetalae</taxon>
        <taxon>rosids</taxon>
        <taxon>fabids</taxon>
        <taxon>Fabales</taxon>
        <taxon>Fabaceae</taxon>
        <taxon>Papilionoideae</taxon>
        <taxon>50 kb inversion clade</taxon>
        <taxon>NPAAA clade</taxon>
        <taxon>Hologalegina</taxon>
        <taxon>IRL clade</taxon>
        <taxon>Trifolieae</taxon>
        <taxon>Medicago</taxon>
    </lineage>
</organism>
<gene>
    <name evidence="7" type="primary">MOB1-B</name>
    <name evidence="5" type="synonym">MOB1B</name>
</gene>
<evidence type="ECO:0000250" key="1">
    <source>
        <dbReference type="UniProtKB" id="P40484"/>
    </source>
</evidence>
<evidence type="ECO:0000256" key="2">
    <source>
        <dbReference type="SAM" id="MobiDB-lite"/>
    </source>
</evidence>
<evidence type="ECO:0000269" key="3">
    <source>
    </source>
</evidence>
<evidence type="ECO:0000303" key="4">
    <source>
    </source>
</evidence>
<evidence type="ECO:0000303" key="5">
    <source>
    </source>
</evidence>
<evidence type="ECO:0000305" key="6"/>
<evidence type="ECO:0000312" key="7">
    <source>
        <dbReference type="EMBL" id="CAJ44124.1"/>
    </source>
</evidence>
<dbReference type="EMBL" id="AM161645">
    <property type="protein sequence ID" value="CAJ44124.1"/>
    <property type="molecule type" value="mRNA"/>
</dbReference>
<dbReference type="SMR" id="Q2WBN3"/>
<dbReference type="GO" id="GO:0005737">
    <property type="term" value="C:cytoplasm"/>
    <property type="evidence" value="ECO:0000314"/>
    <property type="project" value="UniProtKB"/>
</dbReference>
<dbReference type="GO" id="GO:0005856">
    <property type="term" value="C:cytoskeleton"/>
    <property type="evidence" value="ECO:0007669"/>
    <property type="project" value="UniProtKB-KW"/>
</dbReference>
<dbReference type="GO" id="GO:0009524">
    <property type="term" value="C:phragmoplast"/>
    <property type="evidence" value="ECO:0000314"/>
    <property type="project" value="UniProtKB"/>
</dbReference>
<dbReference type="GO" id="GO:0046872">
    <property type="term" value="F:metal ion binding"/>
    <property type="evidence" value="ECO:0007669"/>
    <property type="project" value="UniProtKB-KW"/>
</dbReference>
<dbReference type="FunFam" id="1.20.140.30:FF:000001">
    <property type="entry name" value="MOB kinase activator 1A"/>
    <property type="match status" value="1"/>
</dbReference>
<dbReference type="Gene3D" id="1.20.140.30">
    <property type="entry name" value="MOB kinase activator"/>
    <property type="match status" value="1"/>
</dbReference>
<dbReference type="InterPro" id="IPR005301">
    <property type="entry name" value="MOB_kinase_act_fam"/>
</dbReference>
<dbReference type="InterPro" id="IPR036703">
    <property type="entry name" value="MOB_kinase_act_sf"/>
</dbReference>
<dbReference type="PANTHER" id="PTHR22599">
    <property type="entry name" value="MPS ONE BINDER KINASE ACTIVATOR-LIKE MOB"/>
    <property type="match status" value="1"/>
</dbReference>
<dbReference type="Pfam" id="PF03637">
    <property type="entry name" value="Mob1_phocein"/>
    <property type="match status" value="1"/>
</dbReference>
<dbReference type="SMART" id="SM01388">
    <property type="entry name" value="Mob1_phocein"/>
    <property type="match status" value="1"/>
</dbReference>
<dbReference type="SUPFAM" id="SSF101152">
    <property type="entry name" value="Mob1/phocein"/>
    <property type="match status" value="1"/>
</dbReference>
<reference key="1">
    <citation type="journal article" date="2006" name="Exp. Cell Res.">
        <title>Alfalfa Mob1-like proteins are involved in cell proliferation and are localized in the cell division plane during cytokinesis.</title>
        <authorList>
            <person name="Citterio S."/>
            <person name="Piatti S."/>
            <person name="Albertini E."/>
            <person name="Aina R."/>
            <person name="Varotto S."/>
            <person name="Barcaccia G."/>
        </authorList>
    </citation>
    <scope>NUCLEOTIDE SEQUENCE [MRNA]</scope>
    <scope>TISSUE SPECIFICITY</scope>
    <scope>DEVELOPMENTAL STAGE</scope>
    <scope>SUBCELLULAR LOCATION</scope>
    <source>
        <tissue>Flower</tissue>
    </source>
</reference>
<reference key="2">
    <citation type="journal article" date="2007" name="Evol. Bioinform. Online">
        <title>Characterization and evolution of the cell cycle-associated mob domain-containing proteins in eukaryotes.</title>
        <authorList>
            <person name="Vitulo N."/>
            <person name="Vezzi A."/>
            <person name="Galla G."/>
            <person name="Citterio S."/>
            <person name="Marino G."/>
            <person name="Ruperti B."/>
            <person name="Zermiani M."/>
            <person name="Albertini E."/>
            <person name="Valle G."/>
            <person name="Barcaccia G."/>
        </authorList>
    </citation>
    <scope>GENE FAMILY</scope>
    <scope>NOMENCLATURE</scope>
</reference>
<protein>
    <recommendedName>
        <fullName>MOB kinase activator-like 1B</fullName>
    </recommendedName>
    <alternativeName>
        <fullName>Mob1 homolog 1B</fullName>
    </alternativeName>
    <alternativeName>
        <fullName>Mps one binder kinase activator-like 1B</fullName>
    </alternativeName>
    <alternativeName>
        <fullName evidence="4">MsMob1-4</fullName>
    </alternativeName>
    <alternativeName>
        <fullName evidence="4">MsMob1-B</fullName>
    </alternativeName>
</protein>
<sequence length="215" mass="24663">MSLFGLGSRNQKTFRPKKSAPTGSKGAQLQKHIDATLGSGNLREAVKLPPGEDINEWLAVNTVDFFNQVNTMFGTLTEFCTPSNCPTMTAGPKYEYRWADGVTIKKPIEVSAPKYVEYLMDWMESQLDDETIFPQRLGAPFPPNFRDVVKTIFKRLFRVYAHIYHSHFQKIVSLKEEAHLNTCFKHFVLFTWEFRLIEKAELAPLEDLVDSIIQL</sequence>
<comment type="subcellular location">
    <subcellularLocation>
        <location>Cytoplasm</location>
    </subcellularLocation>
    <subcellularLocation>
        <location>Cytoplasm</location>
        <location>Cytoskeleton</location>
        <location>Phragmoplast</location>
    </subcellularLocation>
    <text evidence="3">Concentrated in punctuate and fibrillar structures during G2 and M phases. Localized to the cell division plane during cytokinesis.</text>
</comment>
<comment type="tissue specificity">
    <text evidence="3">Constitutively expressed with higher expression in roots, flowers and pods than in leaves and stems.</text>
</comment>
<comment type="developmental stage">
    <text evidence="3">Mostly expressed in actively proliferating tissues.</text>
</comment>
<comment type="similarity">
    <text evidence="6">Belongs to the MOB1/phocein family.</text>
</comment>
<keyword id="KW-0963">Cytoplasm</keyword>
<keyword id="KW-0206">Cytoskeleton</keyword>
<keyword id="KW-0479">Metal-binding</keyword>
<keyword id="KW-0862">Zinc</keyword>
<name>MOB1B_MEDSF</name>
<proteinExistence type="evidence at transcript level"/>
<feature type="chain" id="PRO_0000432418" description="MOB kinase activator-like 1B">
    <location>
        <begin position="1"/>
        <end position="215"/>
    </location>
</feature>
<feature type="region of interest" description="Disordered" evidence="2">
    <location>
        <begin position="1"/>
        <end position="29"/>
    </location>
</feature>
<feature type="binding site" evidence="1">
    <location>
        <position position="80"/>
    </location>
    <ligand>
        <name>Zn(2+)</name>
        <dbReference type="ChEBI" id="CHEBI:29105"/>
    </ligand>
</feature>
<feature type="binding site" evidence="1">
    <location>
        <position position="85"/>
    </location>
    <ligand>
        <name>Zn(2+)</name>
        <dbReference type="ChEBI" id="CHEBI:29105"/>
    </ligand>
</feature>
<feature type="binding site" evidence="1">
    <location>
        <position position="162"/>
    </location>
    <ligand>
        <name>Zn(2+)</name>
        <dbReference type="ChEBI" id="CHEBI:29105"/>
    </ligand>
</feature>
<feature type="binding site" evidence="1">
    <location>
        <position position="167"/>
    </location>
    <ligand>
        <name>Zn(2+)</name>
        <dbReference type="ChEBI" id="CHEBI:29105"/>
    </ligand>
</feature>
<accession>Q2WBN3</accession>